<dbReference type="EC" id="3.6.5.-" evidence="1"/>
<dbReference type="EMBL" id="AK128993">
    <property type="protein sequence ID" value="BAC87667.1"/>
    <property type="molecule type" value="mRNA"/>
</dbReference>
<dbReference type="EMBL" id="GL456119">
    <property type="status" value="NOT_ANNOTATED_CDS"/>
    <property type="molecule type" value="Genomic_DNA"/>
</dbReference>
<dbReference type="EMBL" id="BC057969">
    <property type="protein sequence ID" value="AAH57969.1"/>
    <property type="molecule type" value="mRNA"/>
</dbReference>
<dbReference type="EMBL" id="BC115768">
    <property type="protein sequence ID" value="AAI15769.1"/>
    <property type="molecule type" value="mRNA"/>
</dbReference>
<dbReference type="EMBL" id="BK005759">
    <property type="protein sequence ID" value="DAA05845.1"/>
    <property type="molecule type" value="mRNA"/>
</dbReference>
<dbReference type="CCDS" id="CCDS19492.1"/>
<dbReference type="SMR" id="A0A0G2JDV3"/>
<dbReference type="FunCoup" id="A0A0G2JDV3">
    <property type="interactions" value="16"/>
</dbReference>
<dbReference type="STRING" id="10090.ENSMUSP00000142518"/>
<dbReference type="GlyGen" id="A0A0G2JDV3">
    <property type="glycosylation" value="1 site, 1 O-linked glycan (1 site)"/>
</dbReference>
<dbReference type="iPTMnet" id="A0A0G2JDV3"/>
<dbReference type="PhosphoSitePlus" id="A0A0G2JDV3"/>
<dbReference type="jPOST" id="A0A0G2JDV3"/>
<dbReference type="PaxDb" id="10090-ENSMUSP00000062528"/>
<dbReference type="ProteomicsDB" id="351492"/>
<dbReference type="DNASU" id="100702"/>
<dbReference type="AGR" id="MGI:2140937"/>
<dbReference type="MGI" id="MGI:2140937">
    <property type="gene designation" value="Gbp6"/>
</dbReference>
<dbReference type="VEuPathDB" id="HostDB:ENSMUSG00000104713"/>
<dbReference type="eggNOG" id="KOG2037">
    <property type="taxonomic scope" value="Eukaryota"/>
</dbReference>
<dbReference type="InParanoid" id="A0A0G2JDV3"/>
<dbReference type="BioGRID-ORCS" id="100702">
    <property type="hits" value="7 hits in 44 CRISPR screens"/>
</dbReference>
<dbReference type="ChiTaRS" id="Gbp6">
    <property type="organism name" value="mouse"/>
</dbReference>
<dbReference type="PRO" id="PR:A0A0G2JDV3"/>
<dbReference type="Proteomes" id="UP000000589">
    <property type="component" value="Chromosome 5"/>
</dbReference>
<dbReference type="RNAct" id="A0A0G2JDV3">
    <property type="molecule type" value="protein"/>
</dbReference>
<dbReference type="Bgee" id="ENSMUSG00000104713">
    <property type="expression patterns" value="Expressed in thymus and 66 other cell types or tissues"/>
</dbReference>
<dbReference type="ExpressionAtlas" id="A0A0G2JDV3">
    <property type="expression patterns" value="baseline and differential"/>
</dbReference>
<dbReference type="GO" id="GO:0031410">
    <property type="term" value="C:cytoplasmic vesicle"/>
    <property type="evidence" value="ECO:0000314"/>
    <property type="project" value="MGI"/>
</dbReference>
<dbReference type="GO" id="GO:0020005">
    <property type="term" value="C:symbiont-containing vacuole membrane"/>
    <property type="evidence" value="ECO:0000314"/>
    <property type="project" value="MGI"/>
</dbReference>
<dbReference type="GO" id="GO:0005525">
    <property type="term" value="F:GTP binding"/>
    <property type="evidence" value="ECO:0007669"/>
    <property type="project" value="UniProtKB-KW"/>
</dbReference>
<dbReference type="GO" id="GO:0003924">
    <property type="term" value="F:GTPase activity"/>
    <property type="evidence" value="ECO:0007669"/>
    <property type="project" value="InterPro"/>
</dbReference>
<dbReference type="GO" id="GO:0044406">
    <property type="term" value="P:adhesion of symbiont to host"/>
    <property type="evidence" value="ECO:0000314"/>
    <property type="project" value="MGI"/>
</dbReference>
<dbReference type="GO" id="GO:0035458">
    <property type="term" value="P:cellular response to interferon-beta"/>
    <property type="evidence" value="ECO:0000314"/>
    <property type="project" value="UniProtKB"/>
</dbReference>
<dbReference type="GO" id="GO:0071222">
    <property type="term" value="P:cellular response to lipopolysaccharide"/>
    <property type="evidence" value="ECO:0000314"/>
    <property type="project" value="MGI"/>
</dbReference>
<dbReference type="GO" id="GO:0071346">
    <property type="term" value="P:cellular response to type II interferon"/>
    <property type="evidence" value="ECO:0000314"/>
    <property type="project" value="MGI"/>
</dbReference>
<dbReference type="GO" id="GO:0050830">
    <property type="term" value="P:defense response to Gram-positive bacterium"/>
    <property type="evidence" value="ECO:0000314"/>
    <property type="project" value="MGI"/>
</dbReference>
<dbReference type="GO" id="GO:0042832">
    <property type="term" value="P:defense response to protozoan"/>
    <property type="evidence" value="ECO:0000314"/>
    <property type="project" value="MGI"/>
</dbReference>
<dbReference type="GO" id="GO:0009617">
    <property type="term" value="P:response to bacterium"/>
    <property type="evidence" value="ECO:0000270"/>
    <property type="project" value="MGI"/>
</dbReference>
<dbReference type="CDD" id="cd01851">
    <property type="entry name" value="GBP"/>
    <property type="match status" value="1"/>
</dbReference>
<dbReference type="CDD" id="cd16269">
    <property type="entry name" value="GBP_C"/>
    <property type="match status" value="1"/>
</dbReference>
<dbReference type="FunFam" id="1.20.1000.10:FF:000001">
    <property type="entry name" value="Guanylate binding protein 1"/>
    <property type="match status" value="1"/>
</dbReference>
<dbReference type="FunFam" id="3.40.50.300:FF:003746">
    <property type="entry name" value="Guanylate-binding protein 4"/>
    <property type="match status" value="1"/>
</dbReference>
<dbReference type="FunFam" id="3.40.50.300:FF:004172">
    <property type="entry name" value="Guanylate-binding protein family member 6"/>
    <property type="match status" value="1"/>
</dbReference>
<dbReference type="Gene3D" id="1.20.1000.10">
    <property type="entry name" value="Guanylate-binding protein, C-terminal domain"/>
    <property type="match status" value="1"/>
</dbReference>
<dbReference type="Gene3D" id="3.40.50.300">
    <property type="entry name" value="P-loop containing nucleotide triphosphate hydrolases"/>
    <property type="match status" value="1"/>
</dbReference>
<dbReference type="InterPro" id="IPR030386">
    <property type="entry name" value="G_GB1_RHD3_dom"/>
</dbReference>
<dbReference type="InterPro" id="IPR037684">
    <property type="entry name" value="GBP_C"/>
</dbReference>
<dbReference type="InterPro" id="IPR003191">
    <property type="entry name" value="Guanylate-bd/ATL_C"/>
</dbReference>
<dbReference type="InterPro" id="IPR036543">
    <property type="entry name" value="Guanylate-bd_C_sf"/>
</dbReference>
<dbReference type="InterPro" id="IPR015894">
    <property type="entry name" value="Guanylate-bd_N"/>
</dbReference>
<dbReference type="InterPro" id="IPR027417">
    <property type="entry name" value="P-loop_NTPase"/>
</dbReference>
<dbReference type="PANTHER" id="PTHR10751">
    <property type="entry name" value="GUANYLATE BINDING PROTEIN"/>
    <property type="match status" value="1"/>
</dbReference>
<dbReference type="Pfam" id="PF02263">
    <property type="entry name" value="GBP"/>
    <property type="match status" value="1"/>
</dbReference>
<dbReference type="Pfam" id="PF02841">
    <property type="entry name" value="GBP_C"/>
    <property type="match status" value="1"/>
</dbReference>
<dbReference type="SUPFAM" id="SSF48340">
    <property type="entry name" value="Interferon-induced guanylate-binding protein 1 (GBP1), C-terminal domain"/>
    <property type="match status" value="1"/>
</dbReference>
<dbReference type="SUPFAM" id="SSF52540">
    <property type="entry name" value="P-loop containing nucleoside triphosphate hydrolases"/>
    <property type="match status" value="1"/>
</dbReference>
<dbReference type="PROSITE" id="PS51715">
    <property type="entry name" value="G_GB1_RHD3"/>
    <property type="match status" value="1"/>
</dbReference>
<accession>A0A0G2JDV3</accession>
<accession>Q6PEN2</accession>
<accession>Q6ZQL8</accession>
<comment type="function">
    <text evidence="3 4">Interferon (IFN)-inducible GTPase that plays important roles in innate immunity against a diverse range of bacterial, viral and protozoan pathogens, such as bacterial pathogens Listeria monocytogenes and Mycobacterium bovis BCG as well as the protozoan pathogen Toxoplasma gondii (PubMed:18025219, PubMed:21551061). Confers protection to several pathogens, including the bacterial pathogens Listeria monocytogenes and Mycobacterium bovis BCG as well as the protozoan pathogen Toxoplasma gondii (PubMed:18025219, PubMed:21551061).</text>
</comment>
<comment type="catalytic activity">
    <reaction evidence="1">
        <text>GTP + H2O = GDP + phosphate + H(+)</text>
        <dbReference type="Rhea" id="RHEA:19669"/>
        <dbReference type="ChEBI" id="CHEBI:15377"/>
        <dbReference type="ChEBI" id="CHEBI:15378"/>
        <dbReference type="ChEBI" id="CHEBI:37565"/>
        <dbReference type="ChEBI" id="CHEBI:43474"/>
        <dbReference type="ChEBI" id="CHEBI:58189"/>
    </reaction>
</comment>
<comment type="subcellular location">
    <subcellularLocation>
        <location evidence="3">Cytoplasmic vesicle</location>
    </subcellularLocation>
</comment>
<comment type="induction">
    <text evidence="3">By IFNG/IFN-gamma, IFNB1/IFN-beta, LPS and CpG oligodeoxynucleotides (PubMed:18025219). Up-regulated upon infection by T.gondii or L.monocytogenes (PubMed:18025219).</text>
</comment>
<comment type="similarity">
    <text evidence="2">Belongs to the TRAFAC class dynamin-like GTPase superfamily. GB1/RHD3 GTPase family. GB1 subfamily.</text>
</comment>
<reference key="1">
    <citation type="submission" date="2003-07" db="EMBL/GenBank/DDBJ databases">
        <title>NEDO cDNA sequencing project.</title>
        <authorList>
            <person name="Kanehori K."/>
            <person name="Ishibashi T."/>
            <person name="Chiba Y."/>
            <person name="Fujimori K."/>
            <person name="Hiraoka S."/>
            <person name="Tanai H."/>
            <person name="Watanabe S."/>
            <person name="Ishida S."/>
            <person name="Ono Y."/>
            <person name="Hotuta T."/>
            <person name="Watanabe M."/>
            <person name="Sugiyama T."/>
            <person name="Irie R."/>
            <person name="Otsuki T."/>
            <person name="Sato H."/>
            <person name="Ota T."/>
            <person name="Wakamatsu A."/>
            <person name="Ishii S."/>
            <person name="Yamamoto J."/>
            <person name="Isono Y."/>
            <person name="Kawai-Hio Y."/>
            <person name="Saito K."/>
            <person name="Nishikawa T."/>
            <person name="Kimura K."/>
            <person name="Matsuo K."/>
            <person name="Nakamura Y."/>
            <person name="Sekine M."/>
            <person name="Kikuchi H."/>
            <person name="Kanda K."/>
            <person name="Wagatsuma M."/>
            <person name="Takahashi-Fujii A."/>
            <person name="Oshima A."/>
            <person name="Sugiyama A."/>
            <person name="Kawakami B."/>
            <person name="Suzuki Y."/>
            <person name="Sugano S."/>
            <person name="Nagahari K."/>
            <person name="Masuho Y."/>
            <person name="Nagai K."/>
            <person name="Isogai T."/>
        </authorList>
    </citation>
    <scope>NUCLEOTIDE SEQUENCE [LARGE SCALE MRNA]</scope>
</reference>
<reference key="2">
    <citation type="journal article" date="2009" name="PLoS Biol.">
        <title>Lineage-specific biology revealed by a finished genome assembly of the mouse.</title>
        <authorList>
            <person name="Church D.M."/>
            <person name="Goodstadt L."/>
            <person name="Hillier L.W."/>
            <person name="Zody M.C."/>
            <person name="Goldstein S."/>
            <person name="She X."/>
            <person name="Bult C.J."/>
            <person name="Agarwala R."/>
            <person name="Cherry J.L."/>
            <person name="DiCuccio M."/>
            <person name="Hlavina W."/>
            <person name="Kapustin Y."/>
            <person name="Meric P."/>
            <person name="Maglott D."/>
            <person name="Birtle Z."/>
            <person name="Marques A.C."/>
            <person name="Graves T."/>
            <person name="Zhou S."/>
            <person name="Teague B."/>
            <person name="Potamousis K."/>
            <person name="Churas C."/>
            <person name="Place M."/>
            <person name="Herschleb J."/>
            <person name="Runnheim R."/>
            <person name="Forrest D."/>
            <person name="Amos-Landgraf J."/>
            <person name="Schwartz D.C."/>
            <person name="Cheng Z."/>
            <person name="Lindblad-Toh K."/>
            <person name="Eichler E.E."/>
            <person name="Ponting C.P."/>
        </authorList>
    </citation>
    <scope>NUCLEOTIDE SEQUENCE [LARGE SCALE GENOMIC DNA]</scope>
    <source>
        <strain>C57BL/6J</strain>
    </source>
</reference>
<reference key="3">
    <citation type="journal article" date="2004" name="Genome Res.">
        <title>The status, quality, and expansion of the NIH full-length cDNA project: the Mammalian Gene Collection (MGC).</title>
        <authorList>
            <consortium name="The MGC Project Team"/>
        </authorList>
    </citation>
    <scope>NUCLEOTIDE SEQUENCE [LARGE SCALE MRNA]</scope>
    <source>
        <strain>NMRI</strain>
        <tissue>Mammary tumor</tissue>
    </source>
</reference>
<reference key="4">
    <citation type="journal article" date="2007" name="J. Immunol.">
        <title>Extensive characterization of IFN-induced GTPases mGBP1 to mGBP10 involved in host defense.</title>
        <authorList>
            <person name="Degrandi D."/>
            <person name="Konermann C."/>
            <person name="Beuter-Gunia C."/>
            <person name="Kresse A."/>
            <person name="Wurthner J."/>
            <person name="Kurig S."/>
            <person name="Beer S."/>
            <person name="Pfeffer K."/>
        </authorList>
    </citation>
    <scope>IDENTIFICATION</scope>
    <scope>FUNCTION</scope>
    <scope>INDUCTION</scope>
    <scope>SUBCELLULAR LOCATION</scope>
</reference>
<reference key="5">
    <citation type="journal article" date="2011" name="Science">
        <title>A family of IFN-gamma-inducible 65-kD GTPases protects against bacterial infection.</title>
        <authorList>
            <person name="Kim B.H."/>
            <person name="Shenoy A.R."/>
            <person name="Kumar P."/>
            <person name="Das R."/>
            <person name="Tiwari S."/>
            <person name="MacMicking J.D."/>
        </authorList>
    </citation>
    <scope>FUNCTION</scope>
</reference>
<feature type="chain" id="PRO_0000454378" description="Guanylate-binding protein 6">
    <location>
        <begin position="1"/>
        <end position="611"/>
    </location>
</feature>
<feature type="domain" description="GB1/RHD3-type G" evidence="2">
    <location>
        <begin position="33"/>
        <end position="275"/>
    </location>
</feature>
<feature type="region of interest" description="GTPase domain (Globular)" evidence="1">
    <location>
        <begin position="1"/>
        <end position="308"/>
    </location>
</feature>
<feature type="binding site" evidence="1">
    <location>
        <begin position="43"/>
        <end position="50"/>
    </location>
    <ligand>
        <name>GTP</name>
        <dbReference type="ChEBI" id="CHEBI:37565"/>
    </ligand>
</feature>
<feature type="binding site" evidence="1">
    <location>
        <begin position="65"/>
        <end position="67"/>
    </location>
    <ligand>
        <name>GTP</name>
        <dbReference type="ChEBI" id="CHEBI:37565"/>
    </ligand>
</feature>
<feature type="binding site" evidence="1">
    <location>
        <begin position="95"/>
        <end position="99"/>
    </location>
    <ligand>
        <name>GTP</name>
        <dbReference type="ChEBI" id="CHEBI:37565"/>
    </ligand>
</feature>
<feature type="sequence conflict" description="In Ref. 1; BAC87667 and 3; AAH57969/AAI15769." evidence="5" ref="1 3">
    <original>I</original>
    <variation>N</variation>
    <location>
        <position position="130"/>
    </location>
</feature>
<feature type="sequence conflict" description="In Ref. 1; BAC87667 and 3; AAH57969/AAI15769." evidence="5" ref="1 3">
    <original>P</original>
    <variation>L</variation>
    <location>
        <position position="158"/>
    </location>
</feature>
<feature type="sequence conflict" description="In Ref. 1; BAC87667 and 3; AAH57969/AAI15769." evidence="5" ref="1 3">
    <original>T</original>
    <variation>I</variation>
    <location>
        <position position="177"/>
    </location>
</feature>
<feature type="sequence conflict" description="In Ref. 3; AAH57969." evidence="5" ref="3">
    <original>R</original>
    <variation>K</variation>
    <location>
        <position position="289"/>
    </location>
</feature>
<feature type="sequence conflict" description="In Ref. 3; AAH57969." evidence="5" ref="3">
    <original>N</original>
    <variation>D</variation>
    <location>
        <position position="299"/>
    </location>
</feature>
<feature type="sequence conflict" description="In Ref. 1; BAC87667 and 3; AAH57969/AAI15769." evidence="5" ref="1 3">
    <original>D</original>
    <variation>S</variation>
    <location>
        <position position="330"/>
    </location>
</feature>
<feature type="sequence conflict" description="In Ref. 1; BAC87667 and 3; AAH57969/AAI15769." evidence="5" ref="1 3">
    <original>R</original>
    <variation>S</variation>
    <location>
        <position position="341"/>
    </location>
</feature>
<feature type="sequence conflict" description="In Ref. 1; BAC87667 and 3; AAH57969/AAI15769." evidence="5" ref="1 3">
    <original>A</original>
    <variation>V</variation>
    <location>
        <position position="355"/>
    </location>
</feature>
<feature type="sequence conflict" description="In Ref. 1; BAC87667 and 3; AAH57969/AAI15769." evidence="5" ref="1 3">
    <original>M</original>
    <variation>I</variation>
    <location>
        <position position="362"/>
    </location>
</feature>
<feature type="sequence conflict" description="In Ref. 3; AAH57969." evidence="5" ref="3">
    <original>E</original>
    <variation>D</variation>
    <location>
        <position position="499"/>
    </location>
</feature>
<feature type="sequence conflict" description="In Ref. 1; BAC87667 and 3; AAH57969/AAI15769." evidence="5" ref="1 3">
    <original>K</original>
    <variation>R</variation>
    <location>
        <position position="517"/>
    </location>
</feature>
<feature type="sequence conflict" description="In Ref. 1; BAC87667 and 3; AAH57969/AAI15769." evidence="5" ref="1 3">
    <original>L</original>
    <variation>I</variation>
    <location>
        <position position="523"/>
    </location>
</feature>
<feature type="sequence conflict" description="In Ref. 1; BAC87667 and 3; AAH57969/AAI15769." evidence="5" ref="1 3">
    <original>E</original>
    <variation>D</variation>
    <location>
        <position position="590"/>
    </location>
</feature>
<feature type="sequence conflict" description="In Ref. 1; BAC87667 and 3; AAH57969/AAI15769." evidence="5" ref="1 3">
    <original>LF</original>
    <variation>VC</variation>
    <location>
        <begin position="600"/>
        <end position="601"/>
    </location>
</feature>
<name>GBP6_MOUSE</name>
<gene>
    <name type="primary">Gbp6</name>
    <name type="synonym">Mpa2l</name>
</gene>
<proteinExistence type="evidence at transcript level"/>
<evidence type="ECO:0000250" key="1">
    <source>
        <dbReference type="UniProtKB" id="P32455"/>
    </source>
</evidence>
<evidence type="ECO:0000255" key="2">
    <source>
        <dbReference type="PROSITE-ProRule" id="PRU01052"/>
    </source>
</evidence>
<evidence type="ECO:0000269" key="3">
    <source>
    </source>
</evidence>
<evidence type="ECO:0000269" key="4">
    <source>
    </source>
</evidence>
<evidence type="ECO:0000305" key="5"/>
<organism>
    <name type="scientific">Mus musculus</name>
    <name type="common">Mouse</name>
    <dbReference type="NCBI Taxonomy" id="10090"/>
    <lineage>
        <taxon>Eukaryota</taxon>
        <taxon>Metazoa</taxon>
        <taxon>Chordata</taxon>
        <taxon>Craniata</taxon>
        <taxon>Vertebrata</taxon>
        <taxon>Euteleostomi</taxon>
        <taxon>Mammalia</taxon>
        <taxon>Eutheria</taxon>
        <taxon>Euarchontoglires</taxon>
        <taxon>Glires</taxon>
        <taxon>Rodentia</taxon>
        <taxon>Myomorpha</taxon>
        <taxon>Muroidea</taxon>
        <taxon>Muridae</taxon>
        <taxon>Murinae</taxon>
        <taxon>Mus</taxon>
        <taxon>Mus</taxon>
    </lineage>
</organism>
<sequence>MTQPQMAPICLVENHNEQLSVNQEAIEILDKISQPVVVVAIVGLYRTGKSYLMNCLAGQNHGFPLGSTVQSQTKGIWMWCMPHPTKPEHTLVLLDTEGLGDVEKGDPKNDLWIFALSVLLSSTFIYNSMITINHQALEQLQYVTELTELIRAKSSPNPAGIKNSTEFVSFFPDFVWTVRDFMLELKLNGEDITSDDYLENALKLIPGDKPRMQASNSCRECIRLFFPNRKCFVFDRPTHDKELLQKLDSITEDQLDPKFQEVTKAFVSYIFTYAKIKTLKEGIKVTGNRLGILVTTYVNAINSGAVPCLDDAVTTLAQRENSVAVQKAADHYSEQMAQRLRLPTETLQELLDVHAACEKEAMAVFMEHSFKDENQQFLKKLVELIGENKELFLSKNEEASNKYCQEELDRLSKDFMENISTFFVPCGHKLYMDKREKIEHDYWQVPRKGVKASEVFQSFLQSQAFIESSILQADTALTAGEKAIAEERAQKVAAEKEQELLRQKQKEQQEYMEAQEKSHKENLEQLRRKLEQEREQDIKDHDMMLKKLMKDQKAFLEEGFKKKAEEMNKEIQQLRDVIKDKKRNTDRIKEALLNGFSTVLFHYLVRYLKHL</sequence>
<protein>
    <recommendedName>
        <fullName>Guanylate-binding protein 6</fullName>
        <ecNumber evidence="1">3.6.5.-</ecNumber>
    </recommendedName>
    <alternativeName>
        <fullName>GTP-binding protein 6</fullName>
        <shortName>GBP-6</shortName>
    </alternativeName>
    <alternativeName>
        <fullName>Guanine nucleotide-binding protein 6</fullName>
    </alternativeName>
    <alternativeName>
        <fullName>Macrophage activation 2 like protein</fullName>
    </alternativeName>
</protein>
<keyword id="KW-0929">Antimicrobial</keyword>
<keyword id="KW-0968">Cytoplasmic vesicle</keyword>
<keyword id="KW-0342">GTP-binding</keyword>
<keyword id="KW-0378">Hydrolase</keyword>
<keyword id="KW-0391">Immunity</keyword>
<keyword id="KW-0399">Innate immunity</keyword>
<keyword id="KW-0547">Nucleotide-binding</keyword>
<keyword id="KW-1185">Reference proteome</keyword>